<accession>Q48D01</accession>
<feature type="chain" id="PRO_1000017676" description="Adenine deaminase">
    <location>
        <begin position="1"/>
        <end position="317"/>
    </location>
</feature>
<feature type="active site" description="Proton donor" evidence="1">
    <location>
        <position position="197"/>
    </location>
</feature>
<feature type="binding site" evidence="1">
    <location>
        <position position="14"/>
    </location>
    <ligand>
        <name>Zn(2+)</name>
        <dbReference type="ChEBI" id="CHEBI:29105"/>
        <note>catalytic</note>
    </ligand>
</feature>
<feature type="binding site" evidence="1">
    <location>
        <position position="16"/>
    </location>
    <ligand>
        <name>Zn(2+)</name>
        <dbReference type="ChEBI" id="CHEBI:29105"/>
        <note>catalytic</note>
    </ligand>
</feature>
<feature type="binding site" evidence="1">
    <location>
        <position position="194"/>
    </location>
    <ligand>
        <name>Zn(2+)</name>
        <dbReference type="ChEBI" id="CHEBI:29105"/>
        <note>catalytic</note>
    </ligand>
</feature>
<feature type="binding site" evidence="1">
    <location>
        <position position="275"/>
    </location>
    <ligand>
        <name>Zn(2+)</name>
        <dbReference type="ChEBI" id="CHEBI:29105"/>
        <note>catalytic</note>
    </ligand>
</feature>
<feature type="binding site" evidence="1">
    <location>
        <position position="276"/>
    </location>
    <ligand>
        <name>substrate</name>
    </ligand>
</feature>
<feature type="site" description="Important for catalytic activity" evidence="1">
    <location>
        <position position="218"/>
    </location>
</feature>
<gene>
    <name type="ordered locus">PSPPH_4636</name>
</gene>
<name>ADE_PSE14</name>
<sequence>MYDWLNALPKAELHLHLEGSLEPELLFALAERNKIALPWNDVETLRKAYAFNNLQEFLDLYYRGADALRTEQDFYDLTWAYLLRCKEQNVIHTEPFFDPQTHTDRGIPFEVVLAGITGALKDGKSKLGVDSGLILSFLRHLSQEEAEKTLDQALPFRDAFVAVGLDSSEMGHPPSKFQRVFDRARSEGFLTVAHAGEEGPPEYIWEALDLLKIQRIDHGVRAIEDERLMQRIIDEQIPLTVCPLSNTKLCVFDDMAQHNILDMLERGVKVTVNSDDPAYFGGYVTENFHALYTHLGMTEDQAKRLAQNSLDARLVKP</sequence>
<organism>
    <name type="scientific">Pseudomonas savastanoi pv. phaseolicola (strain 1448A / Race 6)</name>
    <name type="common">Pseudomonas syringae pv. phaseolicola (strain 1448A / Race 6)</name>
    <dbReference type="NCBI Taxonomy" id="264730"/>
    <lineage>
        <taxon>Bacteria</taxon>
        <taxon>Pseudomonadati</taxon>
        <taxon>Pseudomonadota</taxon>
        <taxon>Gammaproteobacteria</taxon>
        <taxon>Pseudomonadales</taxon>
        <taxon>Pseudomonadaceae</taxon>
        <taxon>Pseudomonas</taxon>
    </lineage>
</organism>
<keyword id="KW-0378">Hydrolase</keyword>
<keyword id="KW-0479">Metal-binding</keyword>
<keyword id="KW-0546">Nucleotide metabolism</keyword>
<keyword id="KW-0862">Zinc</keyword>
<comment type="function">
    <text evidence="1">Catalyzes the hydrolytic deamination of adenine to hypoxanthine. Plays an important role in the purine salvage pathway and in nitrogen catabolism.</text>
</comment>
<comment type="catalytic activity">
    <reaction evidence="1">
        <text>adenine + H2O + H(+) = hypoxanthine + NH4(+)</text>
        <dbReference type="Rhea" id="RHEA:23688"/>
        <dbReference type="ChEBI" id="CHEBI:15377"/>
        <dbReference type="ChEBI" id="CHEBI:15378"/>
        <dbReference type="ChEBI" id="CHEBI:16708"/>
        <dbReference type="ChEBI" id="CHEBI:17368"/>
        <dbReference type="ChEBI" id="CHEBI:28938"/>
        <dbReference type="EC" id="3.5.4.2"/>
    </reaction>
</comment>
<comment type="cofactor">
    <cofactor evidence="1">
        <name>Zn(2+)</name>
        <dbReference type="ChEBI" id="CHEBI:29105"/>
    </cofactor>
    <text evidence="1">Binds 1 zinc ion per subunit.</text>
</comment>
<comment type="similarity">
    <text evidence="1">Belongs to the metallo-dependent hydrolases superfamily. Adenosine and AMP deaminases family. Adenine deaminase type 2 subfamily.</text>
</comment>
<proteinExistence type="inferred from homology"/>
<protein>
    <recommendedName>
        <fullName evidence="1">Adenine deaminase</fullName>
        <shortName evidence="1">ADE</shortName>
        <ecNumber evidence="1">3.5.4.2</ecNumber>
    </recommendedName>
    <alternativeName>
        <fullName evidence="1">Adenine aminohydrolase</fullName>
        <shortName evidence="1">AAH</shortName>
    </alternativeName>
</protein>
<evidence type="ECO:0000255" key="1">
    <source>
        <dbReference type="HAMAP-Rule" id="MF_01962"/>
    </source>
</evidence>
<reference key="1">
    <citation type="journal article" date="2005" name="J. Bacteriol.">
        <title>Whole-genome sequence analysis of Pseudomonas syringae pv. phaseolicola 1448A reveals divergence among pathovars in genes involved in virulence and transposition.</title>
        <authorList>
            <person name="Joardar V."/>
            <person name="Lindeberg M."/>
            <person name="Jackson R.W."/>
            <person name="Selengut J."/>
            <person name="Dodson R."/>
            <person name="Brinkac L.M."/>
            <person name="Daugherty S.C."/>
            <person name="DeBoy R.T."/>
            <person name="Durkin A.S."/>
            <person name="Gwinn Giglio M."/>
            <person name="Madupu R."/>
            <person name="Nelson W.C."/>
            <person name="Rosovitz M.J."/>
            <person name="Sullivan S.A."/>
            <person name="Crabtree J."/>
            <person name="Creasy T."/>
            <person name="Davidsen T.M."/>
            <person name="Haft D.H."/>
            <person name="Zafar N."/>
            <person name="Zhou L."/>
            <person name="Halpin R."/>
            <person name="Holley T."/>
            <person name="Khouri H.M."/>
            <person name="Feldblyum T.V."/>
            <person name="White O."/>
            <person name="Fraser C.M."/>
            <person name="Chatterjee A.K."/>
            <person name="Cartinhour S."/>
            <person name="Schneider D."/>
            <person name="Mansfield J.W."/>
            <person name="Collmer A."/>
            <person name="Buell R."/>
        </authorList>
    </citation>
    <scope>NUCLEOTIDE SEQUENCE [LARGE SCALE GENOMIC DNA]</scope>
    <source>
        <strain>1448A / Race 6</strain>
    </source>
</reference>
<dbReference type="EC" id="3.5.4.2" evidence="1"/>
<dbReference type="EMBL" id="CP000058">
    <property type="protein sequence ID" value="AAZ35126.1"/>
    <property type="molecule type" value="Genomic_DNA"/>
</dbReference>
<dbReference type="RefSeq" id="WP_011169653.1">
    <property type="nucleotide sequence ID" value="NC_005773.3"/>
</dbReference>
<dbReference type="SMR" id="Q48D01"/>
<dbReference type="KEGG" id="psp:PSPPH_4636"/>
<dbReference type="eggNOG" id="COG1816">
    <property type="taxonomic scope" value="Bacteria"/>
</dbReference>
<dbReference type="HOGENOM" id="CLU_039228_7_0_6"/>
<dbReference type="Proteomes" id="UP000000551">
    <property type="component" value="Chromosome"/>
</dbReference>
<dbReference type="GO" id="GO:0005829">
    <property type="term" value="C:cytosol"/>
    <property type="evidence" value="ECO:0007669"/>
    <property type="project" value="TreeGrafter"/>
</dbReference>
<dbReference type="GO" id="GO:0000034">
    <property type="term" value="F:adenine deaminase activity"/>
    <property type="evidence" value="ECO:0007669"/>
    <property type="project" value="UniProtKB-UniRule"/>
</dbReference>
<dbReference type="GO" id="GO:0008270">
    <property type="term" value="F:zinc ion binding"/>
    <property type="evidence" value="ECO:0007669"/>
    <property type="project" value="UniProtKB-UniRule"/>
</dbReference>
<dbReference type="GO" id="GO:0006146">
    <property type="term" value="P:adenine catabolic process"/>
    <property type="evidence" value="ECO:0007669"/>
    <property type="project" value="UniProtKB-UniRule"/>
</dbReference>
<dbReference type="GO" id="GO:0043103">
    <property type="term" value="P:hypoxanthine salvage"/>
    <property type="evidence" value="ECO:0007669"/>
    <property type="project" value="UniProtKB-UniRule"/>
</dbReference>
<dbReference type="GO" id="GO:0009117">
    <property type="term" value="P:nucleotide metabolic process"/>
    <property type="evidence" value="ECO:0007669"/>
    <property type="project" value="UniProtKB-KW"/>
</dbReference>
<dbReference type="CDD" id="cd01320">
    <property type="entry name" value="ADA"/>
    <property type="match status" value="1"/>
</dbReference>
<dbReference type="FunFam" id="3.20.20.140:FF:000039">
    <property type="entry name" value="Adenine deaminase"/>
    <property type="match status" value="1"/>
</dbReference>
<dbReference type="Gene3D" id="3.20.20.140">
    <property type="entry name" value="Metal-dependent hydrolases"/>
    <property type="match status" value="1"/>
</dbReference>
<dbReference type="HAMAP" id="MF_01962">
    <property type="entry name" value="Adenine_deaminase"/>
    <property type="match status" value="1"/>
</dbReference>
<dbReference type="InterPro" id="IPR001365">
    <property type="entry name" value="A_deaminase_dom"/>
</dbReference>
<dbReference type="InterPro" id="IPR028892">
    <property type="entry name" value="ADE"/>
</dbReference>
<dbReference type="InterPro" id="IPR006330">
    <property type="entry name" value="Ado/ade_deaminase"/>
</dbReference>
<dbReference type="InterPro" id="IPR032466">
    <property type="entry name" value="Metal_Hydrolase"/>
</dbReference>
<dbReference type="NCBIfam" id="TIGR01430">
    <property type="entry name" value="aden_deam"/>
    <property type="match status" value="1"/>
</dbReference>
<dbReference type="NCBIfam" id="NF006850">
    <property type="entry name" value="PRK09358.1-6"/>
    <property type="match status" value="1"/>
</dbReference>
<dbReference type="PANTHER" id="PTHR43114">
    <property type="entry name" value="ADENINE DEAMINASE"/>
    <property type="match status" value="1"/>
</dbReference>
<dbReference type="PANTHER" id="PTHR43114:SF6">
    <property type="entry name" value="ADENINE DEAMINASE"/>
    <property type="match status" value="1"/>
</dbReference>
<dbReference type="Pfam" id="PF00962">
    <property type="entry name" value="A_deaminase"/>
    <property type="match status" value="1"/>
</dbReference>
<dbReference type="SUPFAM" id="SSF51556">
    <property type="entry name" value="Metallo-dependent hydrolases"/>
    <property type="match status" value="1"/>
</dbReference>